<name>YI32_SCHPO</name>
<organism>
    <name type="scientific">Schizosaccharomyces pombe (strain 972 / ATCC 24843)</name>
    <name type="common">Fission yeast</name>
    <dbReference type="NCBI Taxonomy" id="284812"/>
    <lineage>
        <taxon>Eukaryota</taxon>
        <taxon>Fungi</taxon>
        <taxon>Dikarya</taxon>
        <taxon>Ascomycota</taxon>
        <taxon>Taphrinomycotina</taxon>
        <taxon>Schizosaccharomycetes</taxon>
        <taxon>Schizosaccharomycetales</taxon>
        <taxon>Schizosaccharomycetaceae</taxon>
        <taxon>Schizosaccharomyces</taxon>
    </lineage>
</organism>
<feature type="chain" id="PRO_0000343520" description="Uncharacterized MFS-type transporter C1399.02">
    <location>
        <begin position="1"/>
        <end position="589"/>
    </location>
</feature>
<feature type="transmembrane region" description="Helical" evidence="1">
    <location>
        <begin position="90"/>
        <end position="110"/>
    </location>
</feature>
<feature type="transmembrane region" description="Helical" evidence="1">
    <location>
        <begin position="128"/>
        <end position="148"/>
    </location>
</feature>
<feature type="transmembrane region" description="Helical" evidence="1">
    <location>
        <begin position="162"/>
        <end position="182"/>
    </location>
</feature>
<feature type="transmembrane region" description="Helical" evidence="1">
    <location>
        <begin position="189"/>
        <end position="209"/>
    </location>
</feature>
<feature type="transmembrane region" description="Helical" evidence="1">
    <location>
        <begin position="217"/>
        <end position="237"/>
    </location>
</feature>
<feature type="transmembrane region" description="Helical" evidence="1">
    <location>
        <begin position="245"/>
        <end position="265"/>
    </location>
</feature>
<feature type="transmembrane region" description="Helical" evidence="1">
    <location>
        <begin position="284"/>
        <end position="304"/>
    </location>
</feature>
<feature type="transmembrane region" description="Helical" evidence="1">
    <location>
        <begin position="311"/>
        <end position="331"/>
    </location>
</feature>
<feature type="transmembrane region" description="Helical" evidence="1">
    <location>
        <begin position="355"/>
        <end position="375"/>
    </location>
</feature>
<feature type="transmembrane region" description="Helical" evidence="1">
    <location>
        <begin position="390"/>
        <end position="410"/>
    </location>
</feature>
<feature type="transmembrane region" description="Helical" evidence="1">
    <location>
        <begin position="418"/>
        <end position="438"/>
    </location>
</feature>
<feature type="transmembrane region" description="Helical" evidence="1">
    <location>
        <begin position="448"/>
        <end position="468"/>
    </location>
</feature>
<feature type="transmembrane region" description="Helical" evidence="1">
    <location>
        <begin position="483"/>
        <end position="503"/>
    </location>
</feature>
<feature type="transmembrane region" description="Helical" evidence="1">
    <location>
        <begin position="545"/>
        <end position="565"/>
    </location>
</feature>
<accession>Q9HE13</accession>
<proteinExistence type="inferred from homology"/>
<dbReference type="EMBL" id="CU329670">
    <property type="protein sequence ID" value="CAC19745.1"/>
    <property type="molecule type" value="Genomic_DNA"/>
</dbReference>
<dbReference type="RefSeq" id="NP_593512.1">
    <property type="nucleotide sequence ID" value="NM_001018946.2"/>
</dbReference>
<dbReference type="SMR" id="Q9HE13"/>
<dbReference type="BioGRID" id="278988">
    <property type="interactions" value="27"/>
</dbReference>
<dbReference type="FunCoup" id="Q9HE13">
    <property type="interactions" value="33"/>
</dbReference>
<dbReference type="iPTMnet" id="Q9HE13"/>
<dbReference type="PaxDb" id="4896-SPAC1399.02.1"/>
<dbReference type="EnsemblFungi" id="SPAC1399.02.1">
    <property type="protein sequence ID" value="SPAC1399.02.1:pep"/>
    <property type="gene ID" value="SPAC1399.02"/>
</dbReference>
<dbReference type="KEGG" id="spo:2542530"/>
<dbReference type="PomBase" id="SPAC1399.02"/>
<dbReference type="VEuPathDB" id="FungiDB:SPAC1399.02"/>
<dbReference type="eggNOG" id="KOG0254">
    <property type="taxonomic scope" value="Eukaryota"/>
</dbReference>
<dbReference type="HOGENOM" id="CLU_000960_22_0_1"/>
<dbReference type="InParanoid" id="Q9HE13"/>
<dbReference type="OMA" id="FTQTIGW"/>
<dbReference type="PhylomeDB" id="Q9HE13"/>
<dbReference type="PRO" id="PR:Q9HE13"/>
<dbReference type="Proteomes" id="UP000002485">
    <property type="component" value="Chromosome I"/>
</dbReference>
<dbReference type="GO" id="GO:0005886">
    <property type="term" value="C:plasma membrane"/>
    <property type="evidence" value="ECO:0000318"/>
    <property type="project" value="GO_Central"/>
</dbReference>
<dbReference type="GO" id="GO:0022857">
    <property type="term" value="F:transmembrane transporter activity"/>
    <property type="evidence" value="ECO:0000318"/>
    <property type="project" value="GO_Central"/>
</dbReference>
<dbReference type="GO" id="GO:1990822">
    <property type="term" value="P:basic amino acid transmembrane transport"/>
    <property type="evidence" value="ECO:0000266"/>
    <property type="project" value="PomBase"/>
</dbReference>
<dbReference type="GO" id="GO:0055085">
    <property type="term" value="P:transmembrane transport"/>
    <property type="evidence" value="ECO:0000318"/>
    <property type="project" value="GO_Central"/>
</dbReference>
<dbReference type="CDD" id="cd17502">
    <property type="entry name" value="MFS_Azr1_MDR_like"/>
    <property type="match status" value="1"/>
</dbReference>
<dbReference type="FunFam" id="1.20.1250.20:FF:000373">
    <property type="entry name" value="Vacuolar basic amino acid transporter"/>
    <property type="match status" value="1"/>
</dbReference>
<dbReference type="Gene3D" id="1.20.1250.20">
    <property type="entry name" value="MFS general substrate transporter like domains"/>
    <property type="match status" value="2"/>
</dbReference>
<dbReference type="InterPro" id="IPR011701">
    <property type="entry name" value="MFS"/>
</dbReference>
<dbReference type="InterPro" id="IPR020846">
    <property type="entry name" value="MFS_dom"/>
</dbReference>
<dbReference type="InterPro" id="IPR036259">
    <property type="entry name" value="MFS_trans_sf"/>
</dbReference>
<dbReference type="PANTHER" id="PTHR23501:SF102">
    <property type="entry name" value="DRUG TRANSPORTER, PUTATIVE (AFU_ORTHOLOGUE AFUA_3G08530)-RELATED"/>
    <property type="match status" value="1"/>
</dbReference>
<dbReference type="PANTHER" id="PTHR23501">
    <property type="entry name" value="MAJOR FACILITATOR SUPERFAMILY"/>
    <property type="match status" value="1"/>
</dbReference>
<dbReference type="Pfam" id="PF07690">
    <property type="entry name" value="MFS_1"/>
    <property type="match status" value="1"/>
</dbReference>
<dbReference type="PRINTS" id="PR01036">
    <property type="entry name" value="TCRTETB"/>
</dbReference>
<dbReference type="SUPFAM" id="SSF103473">
    <property type="entry name" value="MFS general substrate transporter"/>
    <property type="match status" value="1"/>
</dbReference>
<dbReference type="PROSITE" id="PS50850">
    <property type="entry name" value="MFS"/>
    <property type="match status" value="1"/>
</dbReference>
<gene>
    <name type="ORF">SPAC1399.02</name>
</gene>
<comment type="subcellular location">
    <subcellularLocation>
        <location evidence="1">Membrane</location>
        <topology evidence="1">Multi-pass membrane protein</topology>
    </subcellularLocation>
</comment>
<comment type="similarity">
    <text evidence="2">Belongs to the major facilitator superfamily. TCR/Tet family.</text>
</comment>
<evidence type="ECO:0000255" key="1"/>
<evidence type="ECO:0000305" key="2"/>
<evidence type="ECO:0000312" key="3">
    <source>
        <dbReference type="EMBL" id="CAC19745.1"/>
    </source>
</evidence>
<sequence length="589" mass="63512">MNPSTSPNRNLASPKSLQLYTTGSEVAWYPTALDEANEIKSINSKAFSFKNQDQIYGAGSLKSRFSTHEISSEKNDSPDFTLVLPSNRLYIVIPGLMLSIFLAALDQTVITTAIPTIVANLDGGSSYSWIGTAYSLAETSILPFCGIMSEVVGRKIVLYTSIVLFLFGSAMCGAAQNMLWLVLCRAVQGIGGGGIMSLVTIVIADITPLQTRPYYTGCMGVTWGVASVMGPLIGGAISQNTTWRWIFFINLPTGGLSLALLIFFLNLVPKPTVSFCVFLRDFDFVGIVTITTGVVLFLLGLNIGSTTGHWAHANVLCYLIFGILCIAGFVVNELYTTRTRIIAPSAFQTLSLSSVMVTSFLHYYIMSTVTYYIPIYFQSIKGDGPLMSGVHTLSLAVVSSVVSAISGMGIGKLKNYRYPMIGGWIVLLAGTGSMIAIYYDTPIPRTMGFLALTAVGIGNLFQPNLIAIQASVPPALMATSCSAFMLLRNMGASVGISIGAVIYDQQLTTLLKGTEYSTGLSYSQIASIPSVSERNFVFNVYANAIRTIWIVNCPVAGVGMLLSFFTKQEKLSQSVTEYKEKDKGFKDAP</sequence>
<protein>
    <recommendedName>
        <fullName>Uncharacterized MFS-type transporter C1399.02</fullName>
    </recommendedName>
</protein>
<reference evidence="3" key="1">
    <citation type="journal article" date="2002" name="Nature">
        <title>The genome sequence of Schizosaccharomyces pombe.</title>
        <authorList>
            <person name="Wood V."/>
            <person name="Gwilliam R."/>
            <person name="Rajandream M.A."/>
            <person name="Lyne M.H."/>
            <person name="Lyne R."/>
            <person name="Stewart A."/>
            <person name="Sgouros J.G."/>
            <person name="Peat N."/>
            <person name="Hayles J."/>
            <person name="Baker S.G."/>
            <person name="Basham D."/>
            <person name="Bowman S."/>
            <person name="Brooks K."/>
            <person name="Brown D."/>
            <person name="Brown S."/>
            <person name="Chillingworth T."/>
            <person name="Churcher C.M."/>
            <person name="Collins M."/>
            <person name="Connor R."/>
            <person name="Cronin A."/>
            <person name="Davis P."/>
            <person name="Feltwell T."/>
            <person name="Fraser A."/>
            <person name="Gentles S."/>
            <person name="Goble A."/>
            <person name="Hamlin N."/>
            <person name="Harris D.E."/>
            <person name="Hidalgo J."/>
            <person name="Hodgson G."/>
            <person name="Holroyd S."/>
            <person name="Hornsby T."/>
            <person name="Howarth S."/>
            <person name="Huckle E.J."/>
            <person name="Hunt S."/>
            <person name="Jagels K."/>
            <person name="James K.D."/>
            <person name="Jones L."/>
            <person name="Jones M."/>
            <person name="Leather S."/>
            <person name="McDonald S."/>
            <person name="McLean J."/>
            <person name="Mooney P."/>
            <person name="Moule S."/>
            <person name="Mungall K.L."/>
            <person name="Murphy L.D."/>
            <person name="Niblett D."/>
            <person name="Odell C."/>
            <person name="Oliver K."/>
            <person name="O'Neil S."/>
            <person name="Pearson D."/>
            <person name="Quail M.A."/>
            <person name="Rabbinowitsch E."/>
            <person name="Rutherford K.M."/>
            <person name="Rutter S."/>
            <person name="Saunders D."/>
            <person name="Seeger K."/>
            <person name="Sharp S."/>
            <person name="Skelton J."/>
            <person name="Simmonds M.N."/>
            <person name="Squares R."/>
            <person name="Squares S."/>
            <person name="Stevens K."/>
            <person name="Taylor K."/>
            <person name="Taylor R.G."/>
            <person name="Tivey A."/>
            <person name="Walsh S.V."/>
            <person name="Warren T."/>
            <person name="Whitehead S."/>
            <person name="Woodward J.R."/>
            <person name="Volckaert G."/>
            <person name="Aert R."/>
            <person name="Robben J."/>
            <person name="Grymonprez B."/>
            <person name="Weltjens I."/>
            <person name="Vanstreels E."/>
            <person name="Rieger M."/>
            <person name="Schaefer M."/>
            <person name="Mueller-Auer S."/>
            <person name="Gabel C."/>
            <person name="Fuchs M."/>
            <person name="Duesterhoeft A."/>
            <person name="Fritzc C."/>
            <person name="Holzer E."/>
            <person name="Moestl D."/>
            <person name="Hilbert H."/>
            <person name="Borzym K."/>
            <person name="Langer I."/>
            <person name="Beck A."/>
            <person name="Lehrach H."/>
            <person name="Reinhardt R."/>
            <person name="Pohl T.M."/>
            <person name="Eger P."/>
            <person name="Zimmermann W."/>
            <person name="Wedler H."/>
            <person name="Wambutt R."/>
            <person name="Purnelle B."/>
            <person name="Goffeau A."/>
            <person name="Cadieu E."/>
            <person name="Dreano S."/>
            <person name="Gloux S."/>
            <person name="Lelaure V."/>
            <person name="Mottier S."/>
            <person name="Galibert F."/>
            <person name="Aves S.J."/>
            <person name="Xiang Z."/>
            <person name="Hunt C."/>
            <person name="Moore K."/>
            <person name="Hurst S.M."/>
            <person name="Lucas M."/>
            <person name="Rochet M."/>
            <person name="Gaillardin C."/>
            <person name="Tallada V.A."/>
            <person name="Garzon A."/>
            <person name="Thode G."/>
            <person name="Daga R.R."/>
            <person name="Cruzado L."/>
            <person name="Jimenez J."/>
            <person name="Sanchez M."/>
            <person name="del Rey F."/>
            <person name="Benito J."/>
            <person name="Dominguez A."/>
            <person name="Revuelta J.L."/>
            <person name="Moreno S."/>
            <person name="Armstrong J."/>
            <person name="Forsburg S.L."/>
            <person name="Cerutti L."/>
            <person name="Lowe T."/>
            <person name="McCombie W.R."/>
            <person name="Paulsen I."/>
            <person name="Potashkin J."/>
            <person name="Shpakovski G.V."/>
            <person name="Ussery D."/>
            <person name="Barrell B.G."/>
            <person name="Nurse P."/>
        </authorList>
    </citation>
    <scope>NUCLEOTIDE SEQUENCE [LARGE SCALE GENOMIC DNA]</scope>
    <source>
        <strain>972 / ATCC 24843</strain>
    </source>
</reference>
<keyword id="KW-0472">Membrane</keyword>
<keyword id="KW-1185">Reference proteome</keyword>
<keyword id="KW-0812">Transmembrane</keyword>
<keyword id="KW-1133">Transmembrane helix</keyword>
<keyword id="KW-0813">Transport</keyword>